<evidence type="ECO:0000255" key="1">
    <source>
        <dbReference type="HAMAP-Rule" id="MF_00122"/>
    </source>
</evidence>
<reference key="1">
    <citation type="journal article" date="2007" name="Science">
        <title>The Calyptogena magnifica chemoautotrophic symbiont genome.</title>
        <authorList>
            <person name="Newton I.L.G."/>
            <person name="Woyke T."/>
            <person name="Auchtung T.A."/>
            <person name="Dilly G.F."/>
            <person name="Dutton R.J."/>
            <person name="Fisher M.C."/>
            <person name="Fontanez K.M."/>
            <person name="Lau E."/>
            <person name="Stewart F.J."/>
            <person name="Richardson P.M."/>
            <person name="Barry K.W."/>
            <person name="Saunders E."/>
            <person name="Detter J.C."/>
            <person name="Wu D."/>
            <person name="Eisen J.A."/>
            <person name="Cavanaugh C.M."/>
        </authorList>
    </citation>
    <scope>NUCLEOTIDE SEQUENCE [LARGE SCALE GENOMIC DNA]</scope>
</reference>
<feature type="chain" id="PRO_1000016206" description="Aspartyl/glutamyl-tRNA(Asn/Gln) amidotransferase subunit C">
    <location>
        <begin position="1"/>
        <end position="95"/>
    </location>
</feature>
<sequence length="95" mass="10940">MSLSEKQINQIAYLARLSLNEVQLKNNTQDLNAIFSLIEQLANIETDGIEPMLHPLHMFQRLRKDVVIEKEQSVLFQSVAPKTRNGYYLVPTVIE</sequence>
<name>GATC_RUTMC</name>
<comment type="function">
    <text evidence="1">Allows the formation of correctly charged Asn-tRNA(Asn) or Gln-tRNA(Gln) through the transamidation of misacylated Asp-tRNA(Asn) or Glu-tRNA(Gln) in organisms which lack either or both of asparaginyl-tRNA or glutaminyl-tRNA synthetases. The reaction takes place in the presence of glutamine and ATP through an activated phospho-Asp-tRNA(Asn) or phospho-Glu-tRNA(Gln).</text>
</comment>
<comment type="catalytic activity">
    <reaction evidence="1">
        <text>L-glutamyl-tRNA(Gln) + L-glutamine + ATP + H2O = L-glutaminyl-tRNA(Gln) + L-glutamate + ADP + phosphate + H(+)</text>
        <dbReference type="Rhea" id="RHEA:17521"/>
        <dbReference type="Rhea" id="RHEA-COMP:9681"/>
        <dbReference type="Rhea" id="RHEA-COMP:9684"/>
        <dbReference type="ChEBI" id="CHEBI:15377"/>
        <dbReference type="ChEBI" id="CHEBI:15378"/>
        <dbReference type="ChEBI" id="CHEBI:29985"/>
        <dbReference type="ChEBI" id="CHEBI:30616"/>
        <dbReference type="ChEBI" id="CHEBI:43474"/>
        <dbReference type="ChEBI" id="CHEBI:58359"/>
        <dbReference type="ChEBI" id="CHEBI:78520"/>
        <dbReference type="ChEBI" id="CHEBI:78521"/>
        <dbReference type="ChEBI" id="CHEBI:456216"/>
    </reaction>
</comment>
<comment type="catalytic activity">
    <reaction evidence="1">
        <text>L-aspartyl-tRNA(Asn) + L-glutamine + ATP + H2O = L-asparaginyl-tRNA(Asn) + L-glutamate + ADP + phosphate + 2 H(+)</text>
        <dbReference type="Rhea" id="RHEA:14513"/>
        <dbReference type="Rhea" id="RHEA-COMP:9674"/>
        <dbReference type="Rhea" id="RHEA-COMP:9677"/>
        <dbReference type="ChEBI" id="CHEBI:15377"/>
        <dbReference type="ChEBI" id="CHEBI:15378"/>
        <dbReference type="ChEBI" id="CHEBI:29985"/>
        <dbReference type="ChEBI" id="CHEBI:30616"/>
        <dbReference type="ChEBI" id="CHEBI:43474"/>
        <dbReference type="ChEBI" id="CHEBI:58359"/>
        <dbReference type="ChEBI" id="CHEBI:78515"/>
        <dbReference type="ChEBI" id="CHEBI:78516"/>
        <dbReference type="ChEBI" id="CHEBI:456216"/>
    </reaction>
</comment>
<comment type="subunit">
    <text evidence="1">Heterotrimer of A, B and C subunits.</text>
</comment>
<comment type="similarity">
    <text evidence="1">Belongs to the GatC family.</text>
</comment>
<accession>A1AW12</accession>
<gene>
    <name evidence="1" type="primary">gatC</name>
    <name type="ordered locus">Rmag_0343</name>
</gene>
<keyword id="KW-0067">ATP-binding</keyword>
<keyword id="KW-0436">Ligase</keyword>
<keyword id="KW-0547">Nucleotide-binding</keyword>
<keyword id="KW-0648">Protein biosynthesis</keyword>
<proteinExistence type="inferred from homology"/>
<organism>
    <name type="scientific">Ruthia magnifica subsp. Calyptogena magnifica</name>
    <dbReference type="NCBI Taxonomy" id="413404"/>
    <lineage>
        <taxon>Bacteria</taxon>
        <taxon>Pseudomonadati</taxon>
        <taxon>Pseudomonadota</taxon>
        <taxon>Gammaproteobacteria</taxon>
        <taxon>Candidatus Pseudothioglobaceae</taxon>
        <taxon>Candidatus Ruthturnera</taxon>
    </lineage>
</organism>
<protein>
    <recommendedName>
        <fullName evidence="1">Aspartyl/glutamyl-tRNA(Asn/Gln) amidotransferase subunit C</fullName>
        <shortName evidence="1">Asp/Glu-ADT subunit C</shortName>
        <ecNumber evidence="1">6.3.5.-</ecNumber>
    </recommendedName>
</protein>
<dbReference type="EC" id="6.3.5.-" evidence="1"/>
<dbReference type="EMBL" id="CP000488">
    <property type="protein sequence ID" value="ABL02119.1"/>
    <property type="molecule type" value="Genomic_DNA"/>
</dbReference>
<dbReference type="RefSeq" id="WP_011737744.1">
    <property type="nucleotide sequence ID" value="NC_008610.1"/>
</dbReference>
<dbReference type="SMR" id="A1AW12"/>
<dbReference type="STRING" id="413404.Rmag_0343"/>
<dbReference type="KEGG" id="rma:Rmag_0343"/>
<dbReference type="eggNOG" id="COG0721">
    <property type="taxonomic scope" value="Bacteria"/>
</dbReference>
<dbReference type="HOGENOM" id="CLU_105899_2_2_6"/>
<dbReference type="OrthoDB" id="9794326at2"/>
<dbReference type="Proteomes" id="UP000002587">
    <property type="component" value="Chromosome"/>
</dbReference>
<dbReference type="GO" id="GO:0050566">
    <property type="term" value="F:asparaginyl-tRNA synthase (glutamine-hydrolyzing) activity"/>
    <property type="evidence" value="ECO:0007669"/>
    <property type="project" value="RHEA"/>
</dbReference>
<dbReference type="GO" id="GO:0005524">
    <property type="term" value="F:ATP binding"/>
    <property type="evidence" value="ECO:0007669"/>
    <property type="project" value="UniProtKB-KW"/>
</dbReference>
<dbReference type="GO" id="GO:0050567">
    <property type="term" value="F:glutaminyl-tRNA synthase (glutamine-hydrolyzing) activity"/>
    <property type="evidence" value="ECO:0007669"/>
    <property type="project" value="UniProtKB-UniRule"/>
</dbReference>
<dbReference type="GO" id="GO:0070681">
    <property type="term" value="P:glutaminyl-tRNAGln biosynthesis via transamidation"/>
    <property type="evidence" value="ECO:0007669"/>
    <property type="project" value="TreeGrafter"/>
</dbReference>
<dbReference type="GO" id="GO:0006450">
    <property type="term" value="P:regulation of translational fidelity"/>
    <property type="evidence" value="ECO:0007669"/>
    <property type="project" value="InterPro"/>
</dbReference>
<dbReference type="GO" id="GO:0006412">
    <property type="term" value="P:translation"/>
    <property type="evidence" value="ECO:0007669"/>
    <property type="project" value="UniProtKB-UniRule"/>
</dbReference>
<dbReference type="Gene3D" id="1.10.20.60">
    <property type="entry name" value="Glu-tRNAGln amidotransferase C subunit, N-terminal domain"/>
    <property type="match status" value="1"/>
</dbReference>
<dbReference type="HAMAP" id="MF_00122">
    <property type="entry name" value="GatC"/>
    <property type="match status" value="1"/>
</dbReference>
<dbReference type="InterPro" id="IPR036113">
    <property type="entry name" value="Asp/Glu-ADT_sf_sub_c"/>
</dbReference>
<dbReference type="InterPro" id="IPR003837">
    <property type="entry name" value="GatC"/>
</dbReference>
<dbReference type="NCBIfam" id="TIGR00135">
    <property type="entry name" value="gatC"/>
    <property type="match status" value="1"/>
</dbReference>
<dbReference type="PANTHER" id="PTHR15004">
    <property type="entry name" value="GLUTAMYL-TRNA(GLN) AMIDOTRANSFERASE SUBUNIT C, MITOCHONDRIAL"/>
    <property type="match status" value="1"/>
</dbReference>
<dbReference type="PANTHER" id="PTHR15004:SF0">
    <property type="entry name" value="GLUTAMYL-TRNA(GLN) AMIDOTRANSFERASE SUBUNIT C, MITOCHONDRIAL"/>
    <property type="match status" value="1"/>
</dbReference>
<dbReference type="Pfam" id="PF02686">
    <property type="entry name" value="GatC"/>
    <property type="match status" value="1"/>
</dbReference>
<dbReference type="SUPFAM" id="SSF141000">
    <property type="entry name" value="Glu-tRNAGln amidotransferase C subunit"/>
    <property type="match status" value="1"/>
</dbReference>